<dbReference type="EMBL" id="AE008691">
    <property type="protein sequence ID" value="AAM24685.1"/>
    <property type="molecule type" value="Genomic_DNA"/>
</dbReference>
<dbReference type="RefSeq" id="WP_011025730.1">
    <property type="nucleotide sequence ID" value="NZ_JANUCV010000001.1"/>
</dbReference>
<dbReference type="SMR" id="Q8R9W9"/>
<dbReference type="STRING" id="273068.TTE1463"/>
<dbReference type="KEGG" id="tte:TTE1463"/>
<dbReference type="eggNOG" id="COG2739">
    <property type="taxonomic scope" value="Bacteria"/>
</dbReference>
<dbReference type="HOGENOM" id="CLU_129218_0_2_9"/>
<dbReference type="OrthoDB" id="6392at2"/>
<dbReference type="Proteomes" id="UP000000555">
    <property type="component" value="Chromosome"/>
</dbReference>
<dbReference type="Gene3D" id="1.10.10.10">
    <property type="entry name" value="Winged helix-like DNA-binding domain superfamily/Winged helix DNA-binding domain"/>
    <property type="match status" value="1"/>
</dbReference>
<dbReference type="HAMAP" id="MF_00245">
    <property type="entry name" value="UPF0122"/>
    <property type="match status" value="1"/>
</dbReference>
<dbReference type="InterPro" id="IPR013324">
    <property type="entry name" value="RNA_pol_sigma_r3/r4-like"/>
</dbReference>
<dbReference type="InterPro" id="IPR007394">
    <property type="entry name" value="UPF0122"/>
</dbReference>
<dbReference type="InterPro" id="IPR054831">
    <property type="entry name" value="UPF0122_fam_protein"/>
</dbReference>
<dbReference type="InterPro" id="IPR036388">
    <property type="entry name" value="WH-like_DNA-bd_sf"/>
</dbReference>
<dbReference type="NCBIfam" id="NF001071">
    <property type="entry name" value="PRK00118.2-1"/>
    <property type="match status" value="1"/>
</dbReference>
<dbReference type="NCBIfam" id="NF045758">
    <property type="entry name" value="YlxM"/>
    <property type="match status" value="1"/>
</dbReference>
<dbReference type="PANTHER" id="PTHR40083">
    <property type="entry name" value="UPF0122 PROTEIN CBO2450/CLC_2298"/>
    <property type="match status" value="1"/>
</dbReference>
<dbReference type="PANTHER" id="PTHR40083:SF1">
    <property type="entry name" value="UPF0122 PROTEIN YLXM"/>
    <property type="match status" value="1"/>
</dbReference>
<dbReference type="Pfam" id="PF04297">
    <property type="entry name" value="UPF0122"/>
    <property type="match status" value="1"/>
</dbReference>
<dbReference type="SUPFAM" id="SSF88659">
    <property type="entry name" value="Sigma3 and sigma4 domains of RNA polymerase sigma factors"/>
    <property type="match status" value="1"/>
</dbReference>
<proteinExistence type="inferred from homology"/>
<gene>
    <name type="ordered locus">TTE1463</name>
</gene>
<evidence type="ECO:0000250" key="1"/>
<evidence type="ECO:0000305" key="2"/>
<name>Y1463_CALS4</name>
<comment type="function">
    <text evidence="1">Might take part in the signal recognition particle (SRP) pathway. This is inferred from the conservation of its genetic proximity to ftsY/ffh. May be a regulatory protein (By similarity).</text>
</comment>
<comment type="similarity">
    <text evidence="2">Belongs to the UPF0122 family.</text>
</comment>
<sequence>MEDDFLFMTLLYDFYGALLTDKQREIFEMYYLNDYSLGEISEILDISRQGVYDALKRAEDSLEFYEEKLGLVKKHQEMMKKIEKIKECIKLIKEREKDEEILKIIEDMARELEELNP</sequence>
<keyword id="KW-1185">Reference proteome</keyword>
<feature type="chain" id="PRO_0000211892" description="UPF0122 protein TTE1463">
    <location>
        <begin position="1"/>
        <end position="117"/>
    </location>
</feature>
<protein>
    <recommendedName>
        <fullName>UPF0122 protein TTE1463</fullName>
    </recommendedName>
</protein>
<reference key="1">
    <citation type="journal article" date="2002" name="Genome Res.">
        <title>A complete sequence of the T. tengcongensis genome.</title>
        <authorList>
            <person name="Bao Q."/>
            <person name="Tian Y."/>
            <person name="Li W."/>
            <person name="Xu Z."/>
            <person name="Xuan Z."/>
            <person name="Hu S."/>
            <person name="Dong W."/>
            <person name="Yang J."/>
            <person name="Chen Y."/>
            <person name="Xue Y."/>
            <person name="Xu Y."/>
            <person name="Lai X."/>
            <person name="Huang L."/>
            <person name="Dong X."/>
            <person name="Ma Y."/>
            <person name="Ling L."/>
            <person name="Tan H."/>
            <person name="Chen R."/>
            <person name="Wang J."/>
            <person name="Yu J."/>
            <person name="Yang H."/>
        </authorList>
    </citation>
    <scope>NUCLEOTIDE SEQUENCE [LARGE SCALE GENOMIC DNA]</scope>
    <source>
        <strain>DSM 15242 / JCM 11007 / NBRC 100824 / MB4</strain>
    </source>
</reference>
<organism>
    <name type="scientific">Caldanaerobacter subterraneus subsp. tengcongensis (strain DSM 15242 / JCM 11007 / NBRC 100824 / MB4)</name>
    <name type="common">Thermoanaerobacter tengcongensis</name>
    <dbReference type="NCBI Taxonomy" id="273068"/>
    <lineage>
        <taxon>Bacteria</taxon>
        <taxon>Bacillati</taxon>
        <taxon>Bacillota</taxon>
        <taxon>Clostridia</taxon>
        <taxon>Thermoanaerobacterales</taxon>
        <taxon>Thermoanaerobacteraceae</taxon>
        <taxon>Caldanaerobacter</taxon>
    </lineage>
</organism>
<accession>Q8R9W9</accession>